<accession>B9DVY6</accession>
<organism>
    <name type="scientific">Streptococcus uberis (strain ATCC BAA-854 / 0140J)</name>
    <dbReference type="NCBI Taxonomy" id="218495"/>
    <lineage>
        <taxon>Bacteria</taxon>
        <taxon>Bacillati</taxon>
        <taxon>Bacillota</taxon>
        <taxon>Bacilli</taxon>
        <taxon>Lactobacillales</taxon>
        <taxon>Streptococcaceae</taxon>
        <taxon>Streptococcus</taxon>
    </lineage>
</organism>
<keyword id="KW-0028">Amino-acid biosynthesis</keyword>
<keyword id="KW-0220">Diaminopimelate biosynthesis</keyword>
<keyword id="KW-0378">Hydrolase</keyword>
<keyword id="KW-0457">Lysine biosynthesis</keyword>
<keyword id="KW-1185">Reference proteome</keyword>
<feature type="chain" id="PRO_0000376795" description="N-acetyldiaminopimelate deacetylase">
    <location>
        <begin position="1"/>
        <end position="376"/>
    </location>
</feature>
<feature type="active site" evidence="1">
    <location>
        <position position="69"/>
    </location>
</feature>
<feature type="active site" description="Proton acceptor" evidence="1">
    <location>
        <position position="128"/>
    </location>
</feature>
<evidence type="ECO:0000255" key="1">
    <source>
        <dbReference type="HAMAP-Rule" id="MF_01692"/>
    </source>
</evidence>
<sequence>MLDLIAIRRQLHQIPEIGLEEYQTQAFLLSVIEQLCQDKPFIQIKTWKTGILVFLKGYAPEKTVAWRSDMDGLPITEETGLAFASKHQGRMHACGHDIHMTMALGLLEALVEKQSKHNMLFIFQPAEENEAGGMLMYQSGALDEWMPDEVYALHVRPDLPVGTLASNRATLFAGTCEVKVSFKGKGGHAAFPHHANDALVAASYFVTQVQTIVSRNVDPIEGAVVTFGSLHAGTTNNVISQEALLHGTIRTLTHDMSQLTQKRLTEMAEGIAKSFGLEVDVHLKQGGYLPVENNPELADELISFFKESDTINMIECLPAMTGEDFGFLLSKVKGVMFWLGVDTPYPLHHAKMSPDEGAIKQALPEIKAFLEENIED</sequence>
<protein>
    <recommendedName>
        <fullName evidence="1">N-acetyldiaminopimelate deacetylase</fullName>
        <ecNumber evidence="1">3.5.1.47</ecNumber>
    </recommendedName>
</protein>
<reference key="1">
    <citation type="journal article" date="2009" name="BMC Genomics">
        <title>Evidence for niche adaptation in the genome of the bovine pathogen Streptococcus uberis.</title>
        <authorList>
            <person name="Ward P.N."/>
            <person name="Holden M.T.G."/>
            <person name="Leigh J.A."/>
            <person name="Lennard N."/>
            <person name="Bignell A."/>
            <person name="Barron A."/>
            <person name="Clark L."/>
            <person name="Quail M.A."/>
            <person name="Woodward J."/>
            <person name="Barrell B.G."/>
            <person name="Egan S.A."/>
            <person name="Field T.R."/>
            <person name="Maskell D."/>
            <person name="Kehoe M."/>
            <person name="Dowson C.G."/>
            <person name="Chanter N."/>
            <person name="Whatmore A.M."/>
            <person name="Bentley S.D."/>
            <person name="Parkhill J."/>
        </authorList>
    </citation>
    <scope>NUCLEOTIDE SEQUENCE [LARGE SCALE GENOMIC DNA]</scope>
    <source>
        <strain>ATCC BAA-854 / 0140J</strain>
    </source>
</reference>
<proteinExistence type="inferred from homology"/>
<name>DAPEL_STRU0</name>
<dbReference type="EC" id="3.5.1.47" evidence="1"/>
<dbReference type="EMBL" id="AM946015">
    <property type="protein sequence ID" value="CAR43614.1"/>
    <property type="molecule type" value="Genomic_DNA"/>
</dbReference>
<dbReference type="RefSeq" id="WP_015911991.1">
    <property type="nucleotide sequence ID" value="NC_012004.1"/>
</dbReference>
<dbReference type="SMR" id="B9DVY6"/>
<dbReference type="STRING" id="218495.SUB1698"/>
<dbReference type="KEGG" id="sub:SUB1698"/>
<dbReference type="eggNOG" id="COG1473">
    <property type="taxonomic scope" value="Bacteria"/>
</dbReference>
<dbReference type="HOGENOM" id="CLU_023257_0_1_9"/>
<dbReference type="OrthoDB" id="9776731at2"/>
<dbReference type="UniPathway" id="UPA00034">
    <property type="reaction ID" value="UER00024"/>
</dbReference>
<dbReference type="Proteomes" id="UP000000449">
    <property type="component" value="Chromosome"/>
</dbReference>
<dbReference type="GO" id="GO:0050118">
    <property type="term" value="F:N-acetyldiaminopimelate deacetylase activity"/>
    <property type="evidence" value="ECO:0007669"/>
    <property type="project" value="UniProtKB-UniRule"/>
</dbReference>
<dbReference type="GO" id="GO:0019877">
    <property type="term" value="P:diaminopimelate biosynthetic process"/>
    <property type="evidence" value="ECO:0007669"/>
    <property type="project" value="UniProtKB-UniRule"/>
</dbReference>
<dbReference type="GO" id="GO:0009089">
    <property type="term" value="P:lysine biosynthetic process via diaminopimelate"/>
    <property type="evidence" value="ECO:0007669"/>
    <property type="project" value="UniProtKB-UniRule"/>
</dbReference>
<dbReference type="CDD" id="cd05670">
    <property type="entry name" value="M20_Acy1_YkuR-like"/>
    <property type="match status" value="1"/>
</dbReference>
<dbReference type="FunFam" id="3.30.70.360:FF:000001">
    <property type="entry name" value="N-acetyldiaminopimelate deacetylase"/>
    <property type="match status" value="1"/>
</dbReference>
<dbReference type="Gene3D" id="3.30.70.360">
    <property type="match status" value="1"/>
</dbReference>
<dbReference type="Gene3D" id="3.40.630.10">
    <property type="entry name" value="Zn peptidases"/>
    <property type="match status" value="1"/>
</dbReference>
<dbReference type="HAMAP" id="MF_01692">
    <property type="entry name" value="DapEL"/>
    <property type="match status" value="1"/>
</dbReference>
<dbReference type="InterPro" id="IPR023905">
    <property type="entry name" value="AcetylDAP_deacetylase"/>
</dbReference>
<dbReference type="InterPro" id="IPR017439">
    <property type="entry name" value="Amidohydrolase"/>
</dbReference>
<dbReference type="InterPro" id="IPR036264">
    <property type="entry name" value="Bact_exopeptidase_dim_dom"/>
</dbReference>
<dbReference type="InterPro" id="IPR002933">
    <property type="entry name" value="Peptidase_M20"/>
</dbReference>
<dbReference type="InterPro" id="IPR011650">
    <property type="entry name" value="Peptidase_M20_dimer"/>
</dbReference>
<dbReference type="NCBIfam" id="TIGR01891">
    <property type="entry name" value="amidohydrolases"/>
    <property type="match status" value="1"/>
</dbReference>
<dbReference type="PANTHER" id="PTHR11014:SF98">
    <property type="entry name" value="N-ACETYLDIAMINOPIMELATE DEACETYLASE"/>
    <property type="match status" value="1"/>
</dbReference>
<dbReference type="PANTHER" id="PTHR11014">
    <property type="entry name" value="PEPTIDASE M20 FAMILY MEMBER"/>
    <property type="match status" value="1"/>
</dbReference>
<dbReference type="Pfam" id="PF07687">
    <property type="entry name" value="M20_dimer"/>
    <property type="match status" value="1"/>
</dbReference>
<dbReference type="Pfam" id="PF01546">
    <property type="entry name" value="Peptidase_M20"/>
    <property type="match status" value="1"/>
</dbReference>
<dbReference type="PIRSF" id="PIRSF005962">
    <property type="entry name" value="Pept_M20D_amidohydro"/>
    <property type="match status" value="1"/>
</dbReference>
<dbReference type="SUPFAM" id="SSF55031">
    <property type="entry name" value="Bacterial exopeptidase dimerisation domain"/>
    <property type="match status" value="1"/>
</dbReference>
<dbReference type="SUPFAM" id="SSF53187">
    <property type="entry name" value="Zn-dependent exopeptidases"/>
    <property type="match status" value="1"/>
</dbReference>
<gene>
    <name type="ordered locus">SUB1698</name>
</gene>
<comment type="function">
    <text evidence="1">Catalyzes the conversion of N-acetyl-diaminopimelate to diaminopimelate and acetate.</text>
</comment>
<comment type="catalytic activity">
    <reaction evidence="1">
        <text>N-acetyl-(2S,6S)-2,6-diaminopimelate + H2O = (2S,6S)-2,6-diaminopimelate + acetate</text>
        <dbReference type="Rhea" id="RHEA:20405"/>
        <dbReference type="ChEBI" id="CHEBI:15377"/>
        <dbReference type="ChEBI" id="CHEBI:30089"/>
        <dbReference type="ChEBI" id="CHEBI:57609"/>
        <dbReference type="ChEBI" id="CHEBI:58767"/>
        <dbReference type="EC" id="3.5.1.47"/>
    </reaction>
</comment>
<comment type="pathway">
    <text evidence="1">Amino-acid biosynthesis; L-lysine biosynthesis via DAP pathway; LL-2,6-diaminopimelate from (S)-tetrahydrodipicolinate (acetylase route): step 3/3.</text>
</comment>
<comment type="similarity">
    <text evidence="1">Belongs to the peptidase M20A family. N-acetyldiaminopimelate deacetylase subfamily.</text>
</comment>